<feature type="chain" id="PRO_1000212019" description="Succinate--CoA ligase [ADP-forming] subunit beta">
    <location>
        <begin position="1"/>
        <end position="385"/>
    </location>
</feature>
<feature type="domain" description="ATP-grasp" evidence="1">
    <location>
        <begin position="9"/>
        <end position="237"/>
    </location>
</feature>
<feature type="binding site" evidence="1">
    <location>
        <position position="45"/>
    </location>
    <ligand>
        <name>ATP</name>
        <dbReference type="ChEBI" id="CHEBI:30616"/>
    </ligand>
</feature>
<feature type="binding site" evidence="1">
    <location>
        <begin position="52"/>
        <end position="54"/>
    </location>
    <ligand>
        <name>ATP</name>
        <dbReference type="ChEBI" id="CHEBI:30616"/>
    </ligand>
</feature>
<feature type="binding site" evidence="1">
    <location>
        <position position="94"/>
    </location>
    <ligand>
        <name>ATP</name>
        <dbReference type="ChEBI" id="CHEBI:30616"/>
    </ligand>
</feature>
<feature type="binding site" evidence="1">
    <location>
        <position position="101"/>
    </location>
    <ligand>
        <name>ATP</name>
        <dbReference type="ChEBI" id="CHEBI:30616"/>
    </ligand>
</feature>
<feature type="binding site" evidence="1">
    <location>
        <position position="192"/>
    </location>
    <ligand>
        <name>Mg(2+)</name>
        <dbReference type="ChEBI" id="CHEBI:18420"/>
    </ligand>
</feature>
<feature type="binding site" evidence="1">
    <location>
        <position position="206"/>
    </location>
    <ligand>
        <name>Mg(2+)</name>
        <dbReference type="ChEBI" id="CHEBI:18420"/>
    </ligand>
</feature>
<feature type="binding site" evidence="1">
    <location>
        <position position="257"/>
    </location>
    <ligand>
        <name>substrate</name>
        <note>ligand shared with subunit alpha</note>
    </ligand>
</feature>
<feature type="binding site" evidence="1">
    <location>
        <begin position="314"/>
        <end position="316"/>
    </location>
    <ligand>
        <name>substrate</name>
        <note>ligand shared with subunit alpha</note>
    </ligand>
</feature>
<reference key="1">
    <citation type="journal article" date="2009" name="PLoS Genet.">
        <title>Alliance of proteomics and genomics to unravel the specificities of Sahara bacterium Deinococcus deserti.</title>
        <authorList>
            <person name="de Groot A."/>
            <person name="Dulermo R."/>
            <person name="Ortet P."/>
            <person name="Blanchard L."/>
            <person name="Guerin P."/>
            <person name="Fernandez B."/>
            <person name="Vacherie B."/>
            <person name="Dossat C."/>
            <person name="Jolivet E."/>
            <person name="Siguier P."/>
            <person name="Chandler M."/>
            <person name="Barakat M."/>
            <person name="Dedieu A."/>
            <person name="Barbe V."/>
            <person name="Heulin T."/>
            <person name="Sommer S."/>
            <person name="Achouak W."/>
            <person name="Armengaud J."/>
        </authorList>
    </citation>
    <scope>NUCLEOTIDE SEQUENCE [LARGE SCALE GENOMIC DNA]</scope>
    <source>
        <strain>DSM 17065 / CIP 109153 / LMG 22923 / VCD115</strain>
    </source>
</reference>
<accession>C1CV60</accession>
<comment type="function">
    <text evidence="1">Succinyl-CoA synthetase functions in the citric acid cycle (TCA), coupling the hydrolysis of succinyl-CoA to the synthesis of either ATP or GTP and thus represents the only step of substrate-level phosphorylation in the TCA. The beta subunit provides nucleotide specificity of the enzyme and binds the substrate succinate, while the binding sites for coenzyme A and phosphate are found in the alpha subunit.</text>
</comment>
<comment type="catalytic activity">
    <reaction evidence="1">
        <text>succinate + ATP + CoA = succinyl-CoA + ADP + phosphate</text>
        <dbReference type="Rhea" id="RHEA:17661"/>
        <dbReference type="ChEBI" id="CHEBI:30031"/>
        <dbReference type="ChEBI" id="CHEBI:30616"/>
        <dbReference type="ChEBI" id="CHEBI:43474"/>
        <dbReference type="ChEBI" id="CHEBI:57287"/>
        <dbReference type="ChEBI" id="CHEBI:57292"/>
        <dbReference type="ChEBI" id="CHEBI:456216"/>
        <dbReference type="EC" id="6.2.1.5"/>
    </reaction>
    <physiologicalReaction direction="right-to-left" evidence="1">
        <dbReference type="Rhea" id="RHEA:17663"/>
    </physiologicalReaction>
</comment>
<comment type="catalytic activity">
    <reaction evidence="1">
        <text>GTP + succinate + CoA = succinyl-CoA + GDP + phosphate</text>
        <dbReference type="Rhea" id="RHEA:22120"/>
        <dbReference type="ChEBI" id="CHEBI:30031"/>
        <dbReference type="ChEBI" id="CHEBI:37565"/>
        <dbReference type="ChEBI" id="CHEBI:43474"/>
        <dbReference type="ChEBI" id="CHEBI:57287"/>
        <dbReference type="ChEBI" id="CHEBI:57292"/>
        <dbReference type="ChEBI" id="CHEBI:58189"/>
    </reaction>
    <physiologicalReaction direction="right-to-left" evidence="1">
        <dbReference type="Rhea" id="RHEA:22122"/>
    </physiologicalReaction>
</comment>
<comment type="cofactor">
    <cofactor evidence="1">
        <name>Mg(2+)</name>
        <dbReference type="ChEBI" id="CHEBI:18420"/>
    </cofactor>
    <text evidence="1">Binds 1 Mg(2+) ion per subunit.</text>
</comment>
<comment type="pathway">
    <text evidence="1">Carbohydrate metabolism; tricarboxylic acid cycle; succinate from succinyl-CoA (ligase route): step 1/1.</text>
</comment>
<comment type="subunit">
    <text evidence="1">Heterotetramer of two alpha and two beta subunits.</text>
</comment>
<comment type="similarity">
    <text evidence="1">Belongs to the succinate/malate CoA ligase beta subunit family.</text>
</comment>
<gene>
    <name evidence="1" type="primary">sucC</name>
    <name type="ordered locus">Deide_11710</name>
</gene>
<evidence type="ECO:0000255" key="1">
    <source>
        <dbReference type="HAMAP-Rule" id="MF_00558"/>
    </source>
</evidence>
<name>SUCC_DEIDV</name>
<sequence length="385" mass="41556">MKLHEYQGKEILRQFGVNVQDGKVARTPDEVRQIAREYGQPVVVKAQVHVGGRGKAGGVKFSPTEDKAFENGEKILGMDIKGLTVNKVLVTKAVDIDAGTEYYVGMIVDRNVQSFTLMASAEGGMEIEEVAAATPEKIIKHRVDPVTGLRPYEAREVAIRAGFKGNLNKIADMMVKMSEAALKRDAVLVEINPLFVGPDGVPLALDTKFEIDDNAMYRHQDLADWRELEAEHPLEIEASKYGFAYVKLDGNVGVLGNGAGIVMTSLDVVNRAGAKPANFLDIGGGAKAEVVYNAVKLVSKDSDVKAIFINIFGGITRADEVAKGVIQALKDGILTKPVRMRIAGTAEDEAKALLAEVNSPLIQMYPTMFEAADEAAKEANAAEAK</sequence>
<protein>
    <recommendedName>
        <fullName evidence="1">Succinate--CoA ligase [ADP-forming] subunit beta</fullName>
        <ecNumber evidence="1">6.2.1.5</ecNumber>
    </recommendedName>
    <alternativeName>
        <fullName evidence="1">Succinyl-CoA synthetase subunit beta</fullName>
        <shortName evidence="1">SCS-beta</shortName>
    </alternativeName>
</protein>
<organism>
    <name type="scientific">Deinococcus deserti (strain DSM 17065 / CIP 109153 / LMG 22923 / VCD115)</name>
    <dbReference type="NCBI Taxonomy" id="546414"/>
    <lineage>
        <taxon>Bacteria</taxon>
        <taxon>Thermotogati</taxon>
        <taxon>Deinococcota</taxon>
        <taxon>Deinococci</taxon>
        <taxon>Deinococcales</taxon>
        <taxon>Deinococcaceae</taxon>
        <taxon>Deinococcus</taxon>
    </lineage>
</organism>
<dbReference type="EC" id="6.2.1.5" evidence="1"/>
<dbReference type="EMBL" id="CP001114">
    <property type="protein sequence ID" value="ACO46077.1"/>
    <property type="molecule type" value="Genomic_DNA"/>
</dbReference>
<dbReference type="RefSeq" id="WP_012693200.1">
    <property type="nucleotide sequence ID" value="NC_012526.1"/>
</dbReference>
<dbReference type="SMR" id="C1CV60"/>
<dbReference type="STRING" id="546414.Deide_11710"/>
<dbReference type="PaxDb" id="546414-Deide_11710"/>
<dbReference type="KEGG" id="ddr:Deide_11710"/>
<dbReference type="eggNOG" id="COG0045">
    <property type="taxonomic scope" value="Bacteria"/>
</dbReference>
<dbReference type="HOGENOM" id="CLU_037430_0_2_0"/>
<dbReference type="OrthoDB" id="9802602at2"/>
<dbReference type="UniPathway" id="UPA00223">
    <property type="reaction ID" value="UER00999"/>
</dbReference>
<dbReference type="Proteomes" id="UP000002208">
    <property type="component" value="Chromosome"/>
</dbReference>
<dbReference type="GO" id="GO:0005829">
    <property type="term" value="C:cytosol"/>
    <property type="evidence" value="ECO:0007669"/>
    <property type="project" value="TreeGrafter"/>
</dbReference>
<dbReference type="GO" id="GO:0042709">
    <property type="term" value="C:succinate-CoA ligase complex"/>
    <property type="evidence" value="ECO:0007669"/>
    <property type="project" value="TreeGrafter"/>
</dbReference>
<dbReference type="GO" id="GO:0005524">
    <property type="term" value="F:ATP binding"/>
    <property type="evidence" value="ECO:0007669"/>
    <property type="project" value="UniProtKB-UniRule"/>
</dbReference>
<dbReference type="GO" id="GO:0000287">
    <property type="term" value="F:magnesium ion binding"/>
    <property type="evidence" value="ECO:0007669"/>
    <property type="project" value="UniProtKB-UniRule"/>
</dbReference>
<dbReference type="GO" id="GO:0004775">
    <property type="term" value="F:succinate-CoA ligase (ADP-forming) activity"/>
    <property type="evidence" value="ECO:0007669"/>
    <property type="project" value="UniProtKB-UniRule"/>
</dbReference>
<dbReference type="GO" id="GO:0004776">
    <property type="term" value="F:succinate-CoA ligase (GDP-forming) activity"/>
    <property type="evidence" value="ECO:0007669"/>
    <property type="project" value="RHEA"/>
</dbReference>
<dbReference type="GO" id="GO:0006104">
    <property type="term" value="P:succinyl-CoA metabolic process"/>
    <property type="evidence" value="ECO:0007669"/>
    <property type="project" value="TreeGrafter"/>
</dbReference>
<dbReference type="GO" id="GO:0006099">
    <property type="term" value="P:tricarboxylic acid cycle"/>
    <property type="evidence" value="ECO:0007669"/>
    <property type="project" value="UniProtKB-UniRule"/>
</dbReference>
<dbReference type="FunFam" id="3.30.1490.20:FF:000014">
    <property type="entry name" value="Succinate--CoA ligase [ADP-forming] subunit beta"/>
    <property type="match status" value="1"/>
</dbReference>
<dbReference type="FunFam" id="3.30.470.20:FF:000002">
    <property type="entry name" value="Succinate--CoA ligase [ADP-forming] subunit beta"/>
    <property type="match status" value="1"/>
</dbReference>
<dbReference type="FunFam" id="3.40.50.261:FF:000007">
    <property type="entry name" value="Succinate--CoA ligase [ADP-forming] subunit beta"/>
    <property type="match status" value="1"/>
</dbReference>
<dbReference type="Gene3D" id="3.30.1490.20">
    <property type="entry name" value="ATP-grasp fold, A domain"/>
    <property type="match status" value="1"/>
</dbReference>
<dbReference type="Gene3D" id="3.30.470.20">
    <property type="entry name" value="ATP-grasp fold, B domain"/>
    <property type="match status" value="1"/>
</dbReference>
<dbReference type="Gene3D" id="3.40.50.261">
    <property type="entry name" value="Succinyl-CoA synthetase domains"/>
    <property type="match status" value="1"/>
</dbReference>
<dbReference type="HAMAP" id="MF_00558">
    <property type="entry name" value="Succ_CoA_beta"/>
    <property type="match status" value="1"/>
</dbReference>
<dbReference type="InterPro" id="IPR011761">
    <property type="entry name" value="ATP-grasp"/>
</dbReference>
<dbReference type="InterPro" id="IPR013650">
    <property type="entry name" value="ATP-grasp_succ-CoA_synth-type"/>
</dbReference>
<dbReference type="InterPro" id="IPR013815">
    <property type="entry name" value="ATP_grasp_subdomain_1"/>
</dbReference>
<dbReference type="InterPro" id="IPR017866">
    <property type="entry name" value="Succ-CoA_synthase_bsu_CS"/>
</dbReference>
<dbReference type="InterPro" id="IPR005811">
    <property type="entry name" value="SUCC_ACL_C"/>
</dbReference>
<dbReference type="InterPro" id="IPR005809">
    <property type="entry name" value="Succ_CoA_ligase-like_bsu"/>
</dbReference>
<dbReference type="InterPro" id="IPR016102">
    <property type="entry name" value="Succinyl-CoA_synth-like"/>
</dbReference>
<dbReference type="NCBIfam" id="NF001913">
    <property type="entry name" value="PRK00696.1"/>
    <property type="match status" value="1"/>
</dbReference>
<dbReference type="NCBIfam" id="TIGR01016">
    <property type="entry name" value="sucCoAbeta"/>
    <property type="match status" value="1"/>
</dbReference>
<dbReference type="PANTHER" id="PTHR11815:SF10">
    <property type="entry name" value="SUCCINATE--COA LIGASE [GDP-FORMING] SUBUNIT BETA, MITOCHONDRIAL"/>
    <property type="match status" value="1"/>
</dbReference>
<dbReference type="PANTHER" id="PTHR11815">
    <property type="entry name" value="SUCCINYL-COA SYNTHETASE BETA CHAIN"/>
    <property type="match status" value="1"/>
</dbReference>
<dbReference type="Pfam" id="PF08442">
    <property type="entry name" value="ATP-grasp_2"/>
    <property type="match status" value="1"/>
</dbReference>
<dbReference type="Pfam" id="PF00549">
    <property type="entry name" value="Ligase_CoA"/>
    <property type="match status" value="1"/>
</dbReference>
<dbReference type="PIRSF" id="PIRSF001554">
    <property type="entry name" value="SucCS_beta"/>
    <property type="match status" value="1"/>
</dbReference>
<dbReference type="SUPFAM" id="SSF56059">
    <property type="entry name" value="Glutathione synthetase ATP-binding domain-like"/>
    <property type="match status" value="1"/>
</dbReference>
<dbReference type="SUPFAM" id="SSF52210">
    <property type="entry name" value="Succinyl-CoA synthetase domains"/>
    <property type="match status" value="1"/>
</dbReference>
<dbReference type="PROSITE" id="PS50975">
    <property type="entry name" value="ATP_GRASP"/>
    <property type="match status" value="1"/>
</dbReference>
<dbReference type="PROSITE" id="PS01217">
    <property type="entry name" value="SUCCINYL_COA_LIG_3"/>
    <property type="match status" value="1"/>
</dbReference>
<keyword id="KW-0067">ATP-binding</keyword>
<keyword id="KW-0436">Ligase</keyword>
<keyword id="KW-0460">Magnesium</keyword>
<keyword id="KW-0479">Metal-binding</keyword>
<keyword id="KW-0547">Nucleotide-binding</keyword>
<keyword id="KW-1185">Reference proteome</keyword>
<keyword id="KW-0816">Tricarboxylic acid cycle</keyword>
<proteinExistence type="inferred from homology"/>